<keyword id="KW-0012">Acyltransferase</keyword>
<keyword id="KW-0963">Cytoplasm</keyword>
<keyword id="KW-0808">Transferase</keyword>
<reference key="1">
    <citation type="journal article" date="2011" name="J. Bacteriol.">
        <title>Comparative genomics of 28 Salmonella enterica isolates: evidence for CRISPR-mediated adaptive sublineage evolution.</title>
        <authorList>
            <person name="Fricke W.F."/>
            <person name="Mammel M.K."/>
            <person name="McDermott P.F."/>
            <person name="Tartera C."/>
            <person name="White D.G."/>
            <person name="Leclerc J.E."/>
            <person name="Ravel J."/>
            <person name="Cebula T.A."/>
        </authorList>
    </citation>
    <scope>NUCLEOTIDE SEQUENCE [LARGE SCALE GENOMIC DNA]</scope>
    <source>
        <strain>SL483</strain>
    </source>
</reference>
<evidence type="ECO:0000255" key="1">
    <source>
        <dbReference type="HAMAP-Rule" id="MF_00688"/>
    </source>
</evidence>
<comment type="function">
    <text evidence="1">Functions in the N-end rule pathway of protein degradation where it conjugates Leu, Phe and, less efficiently, Met from aminoacyl-tRNAs to the N-termini of proteins containing an N-terminal arginine or lysine.</text>
</comment>
<comment type="catalytic activity">
    <reaction evidence="1">
        <text>N-terminal L-lysyl-[protein] + L-leucyl-tRNA(Leu) = N-terminal L-leucyl-L-lysyl-[protein] + tRNA(Leu) + H(+)</text>
        <dbReference type="Rhea" id="RHEA:12340"/>
        <dbReference type="Rhea" id="RHEA-COMP:9613"/>
        <dbReference type="Rhea" id="RHEA-COMP:9622"/>
        <dbReference type="Rhea" id="RHEA-COMP:12670"/>
        <dbReference type="Rhea" id="RHEA-COMP:12671"/>
        <dbReference type="ChEBI" id="CHEBI:15378"/>
        <dbReference type="ChEBI" id="CHEBI:65249"/>
        <dbReference type="ChEBI" id="CHEBI:78442"/>
        <dbReference type="ChEBI" id="CHEBI:78494"/>
        <dbReference type="ChEBI" id="CHEBI:133043"/>
        <dbReference type="EC" id="2.3.2.6"/>
    </reaction>
</comment>
<comment type="catalytic activity">
    <reaction evidence="1">
        <text>N-terminal L-arginyl-[protein] + L-leucyl-tRNA(Leu) = N-terminal L-leucyl-L-arginyl-[protein] + tRNA(Leu) + H(+)</text>
        <dbReference type="Rhea" id="RHEA:50416"/>
        <dbReference type="Rhea" id="RHEA-COMP:9613"/>
        <dbReference type="Rhea" id="RHEA-COMP:9622"/>
        <dbReference type="Rhea" id="RHEA-COMP:12672"/>
        <dbReference type="Rhea" id="RHEA-COMP:12673"/>
        <dbReference type="ChEBI" id="CHEBI:15378"/>
        <dbReference type="ChEBI" id="CHEBI:64719"/>
        <dbReference type="ChEBI" id="CHEBI:78442"/>
        <dbReference type="ChEBI" id="CHEBI:78494"/>
        <dbReference type="ChEBI" id="CHEBI:133044"/>
        <dbReference type="EC" id="2.3.2.6"/>
    </reaction>
</comment>
<comment type="catalytic activity">
    <reaction evidence="1">
        <text>L-phenylalanyl-tRNA(Phe) + an N-terminal L-alpha-aminoacyl-[protein] = an N-terminal L-phenylalanyl-L-alpha-aminoacyl-[protein] + tRNA(Phe)</text>
        <dbReference type="Rhea" id="RHEA:43632"/>
        <dbReference type="Rhea" id="RHEA-COMP:9668"/>
        <dbReference type="Rhea" id="RHEA-COMP:9699"/>
        <dbReference type="Rhea" id="RHEA-COMP:10636"/>
        <dbReference type="Rhea" id="RHEA-COMP:10637"/>
        <dbReference type="ChEBI" id="CHEBI:78442"/>
        <dbReference type="ChEBI" id="CHEBI:78531"/>
        <dbReference type="ChEBI" id="CHEBI:78597"/>
        <dbReference type="ChEBI" id="CHEBI:83561"/>
        <dbReference type="EC" id="2.3.2.6"/>
    </reaction>
</comment>
<comment type="subcellular location">
    <subcellularLocation>
        <location evidence="1">Cytoplasm</location>
    </subcellularLocation>
</comment>
<comment type="similarity">
    <text evidence="1">Belongs to the L/F-transferase family.</text>
</comment>
<feature type="chain" id="PRO_1000131944" description="Leucyl/phenylalanyl-tRNA--protein transferase">
    <location>
        <begin position="1"/>
        <end position="234"/>
    </location>
</feature>
<dbReference type="EC" id="2.3.2.6" evidence="1"/>
<dbReference type="EMBL" id="CP001138">
    <property type="protein sequence ID" value="ACH50522.1"/>
    <property type="molecule type" value="Genomic_DNA"/>
</dbReference>
<dbReference type="RefSeq" id="WP_001241650.1">
    <property type="nucleotide sequence ID" value="NC_011149.1"/>
</dbReference>
<dbReference type="SMR" id="B5F138"/>
<dbReference type="KEGG" id="sea:SeAg_B0960"/>
<dbReference type="HOGENOM" id="CLU_075045_0_0_6"/>
<dbReference type="Proteomes" id="UP000008819">
    <property type="component" value="Chromosome"/>
</dbReference>
<dbReference type="GO" id="GO:0005737">
    <property type="term" value="C:cytoplasm"/>
    <property type="evidence" value="ECO:0007669"/>
    <property type="project" value="UniProtKB-SubCell"/>
</dbReference>
<dbReference type="GO" id="GO:0008914">
    <property type="term" value="F:leucyl-tRNA--protein transferase activity"/>
    <property type="evidence" value="ECO:0007669"/>
    <property type="project" value="UniProtKB-UniRule"/>
</dbReference>
<dbReference type="GO" id="GO:0030163">
    <property type="term" value="P:protein catabolic process"/>
    <property type="evidence" value="ECO:0007669"/>
    <property type="project" value="UniProtKB-UniRule"/>
</dbReference>
<dbReference type="FunFam" id="3.30.70.3550:FF:000001">
    <property type="entry name" value="Leucyl/phenylalanyl-tRNA--protein transferase"/>
    <property type="match status" value="1"/>
</dbReference>
<dbReference type="FunFam" id="3.40.630.70:FF:000001">
    <property type="entry name" value="Leucyl/phenylalanyl-tRNA--protein transferase"/>
    <property type="match status" value="1"/>
</dbReference>
<dbReference type="Gene3D" id="3.40.630.70">
    <property type="entry name" value="Leucyl/phenylalanyl-tRNA-protein transferase, C-terminal domain"/>
    <property type="match status" value="1"/>
</dbReference>
<dbReference type="Gene3D" id="3.30.70.3550">
    <property type="entry name" value="Leucyl/phenylalanyl-tRNA-protein transferase, N-terminal domain"/>
    <property type="match status" value="1"/>
</dbReference>
<dbReference type="HAMAP" id="MF_00688">
    <property type="entry name" value="Leu_Phe_trans"/>
    <property type="match status" value="1"/>
</dbReference>
<dbReference type="InterPro" id="IPR016181">
    <property type="entry name" value="Acyl_CoA_acyltransferase"/>
</dbReference>
<dbReference type="InterPro" id="IPR004616">
    <property type="entry name" value="Leu/Phe-tRNA_Trfase"/>
</dbReference>
<dbReference type="InterPro" id="IPR042203">
    <property type="entry name" value="Leu/Phe-tRNA_Trfase_C"/>
</dbReference>
<dbReference type="InterPro" id="IPR042221">
    <property type="entry name" value="Leu/Phe-tRNA_Trfase_N"/>
</dbReference>
<dbReference type="NCBIfam" id="TIGR00667">
    <property type="entry name" value="aat"/>
    <property type="match status" value="1"/>
</dbReference>
<dbReference type="PANTHER" id="PTHR30098">
    <property type="entry name" value="LEUCYL/PHENYLALANYL-TRNA--PROTEIN TRANSFERASE"/>
    <property type="match status" value="1"/>
</dbReference>
<dbReference type="PANTHER" id="PTHR30098:SF2">
    <property type="entry name" value="LEUCYL_PHENYLALANYL-TRNA--PROTEIN TRANSFERASE"/>
    <property type="match status" value="1"/>
</dbReference>
<dbReference type="Pfam" id="PF03588">
    <property type="entry name" value="Leu_Phe_trans"/>
    <property type="match status" value="1"/>
</dbReference>
<dbReference type="SUPFAM" id="SSF55729">
    <property type="entry name" value="Acyl-CoA N-acyltransferases (Nat)"/>
    <property type="match status" value="1"/>
</dbReference>
<proteinExistence type="inferred from homology"/>
<name>LFTR_SALA4</name>
<gene>
    <name evidence="1" type="primary">aat</name>
    <name type="ordered locus">SeAg_B0960</name>
</gene>
<accession>B5F138</accession>
<organism>
    <name type="scientific">Salmonella agona (strain SL483)</name>
    <dbReference type="NCBI Taxonomy" id="454166"/>
    <lineage>
        <taxon>Bacteria</taxon>
        <taxon>Pseudomonadati</taxon>
        <taxon>Pseudomonadota</taxon>
        <taxon>Gammaproteobacteria</taxon>
        <taxon>Enterobacterales</taxon>
        <taxon>Enterobacteriaceae</taxon>
        <taxon>Salmonella</taxon>
    </lineage>
</organism>
<protein>
    <recommendedName>
        <fullName evidence="1">Leucyl/phenylalanyl-tRNA--protein transferase</fullName>
        <ecNumber evidence="1">2.3.2.6</ecNumber>
    </recommendedName>
    <alternativeName>
        <fullName evidence="1">L/F-transferase</fullName>
    </alternativeName>
    <alternativeName>
        <fullName evidence="1">Leucyltransferase</fullName>
    </alternativeName>
    <alternativeName>
        <fullName evidence="1">Phenyalanyltransferase</fullName>
    </alternativeName>
</protein>
<sequence length="234" mass="26673">MRLVQLSRHSIAFPSPEGALREPNGLLALGGDLSPARLLMAYQHGIFPWFSPGDPILWWSPDPRAVLWPEKFHLSRSMKRFHNASPYRVTLNYAFDRVIDGCANHRDEGTWITRGIEEAYRRLHELGHAHSIEVWRDRELVGGMYGVSQGALFCGESMFSRQENASKTALLVFCAEFTRHGGKLIDCQVLNSHTASLGAIEIPRRDYLDHLAALRQQPLASRFWVPRTLFLPRK</sequence>